<organism>
    <name type="scientific">Burkholderia pseudomallei (strain K96243)</name>
    <dbReference type="NCBI Taxonomy" id="272560"/>
    <lineage>
        <taxon>Bacteria</taxon>
        <taxon>Pseudomonadati</taxon>
        <taxon>Pseudomonadota</taxon>
        <taxon>Betaproteobacteria</taxon>
        <taxon>Burkholderiales</taxon>
        <taxon>Burkholderiaceae</taxon>
        <taxon>Burkholderia</taxon>
        <taxon>pseudomallei group</taxon>
    </lineage>
</organism>
<keyword id="KW-0378">Hydrolase</keyword>
<keyword id="KW-0460">Magnesium</keyword>
<keyword id="KW-0511">Multifunctional enzyme</keyword>
<keyword id="KW-0548">Nucleotidyltransferase</keyword>
<keyword id="KW-1185">Reference proteome</keyword>
<keyword id="KW-0677">Repeat</keyword>
<keyword id="KW-0808">Transferase</keyword>
<reference key="1">
    <citation type="journal article" date="2004" name="Proc. Natl. Acad. Sci. U.S.A.">
        <title>Genomic plasticity of the causative agent of melioidosis, Burkholderia pseudomallei.</title>
        <authorList>
            <person name="Holden M.T.G."/>
            <person name="Titball R.W."/>
            <person name="Peacock S.J."/>
            <person name="Cerdeno-Tarraga A.-M."/>
            <person name="Atkins T."/>
            <person name="Crossman L.C."/>
            <person name="Pitt T."/>
            <person name="Churcher C."/>
            <person name="Mungall K.L."/>
            <person name="Bentley S.D."/>
            <person name="Sebaihia M."/>
            <person name="Thomson N.R."/>
            <person name="Bason N."/>
            <person name="Beacham I.R."/>
            <person name="Brooks K."/>
            <person name="Brown K.A."/>
            <person name="Brown N.F."/>
            <person name="Challis G.L."/>
            <person name="Cherevach I."/>
            <person name="Chillingworth T."/>
            <person name="Cronin A."/>
            <person name="Crossett B."/>
            <person name="Davis P."/>
            <person name="DeShazer D."/>
            <person name="Feltwell T."/>
            <person name="Fraser A."/>
            <person name="Hance Z."/>
            <person name="Hauser H."/>
            <person name="Holroyd S."/>
            <person name="Jagels K."/>
            <person name="Keith K.E."/>
            <person name="Maddison M."/>
            <person name="Moule S."/>
            <person name="Price C."/>
            <person name="Quail M.A."/>
            <person name="Rabbinowitsch E."/>
            <person name="Rutherford K."/>
            <person name="Sanders M."/>
            <person name="Simmonds M."/>
            <person name="Songsivilai S."/>
            <person name="Stevens K."/>
            <person name="Tumapa S."/>
            <person name="Vesaratchavest M."/>
            <person name="Whitehead S."/>
            <person name="Yeats C."/>
            <person name="Barrell B.G."/>
            <person name="Oyston P.C.F."/>
            <person name="Parkhill J."/>
        </authorList>
    </citation>
    <scope>NUCLEOTIDE SEQUENCE [LARGE SCALE GENOMIC DNA]</scope>
    <source>
        <strain>K96243</strain>
    </source>
</reference>
<proteinExistence type="inferred from homology"/>
<sequence length="858" mass="96711">MSASVAEPPPALSRKAEFKAAKAELLARFKSANHVTPLMHALSRATDDALRSLWQECGLPATLALVAVGGFGRGELSPHSDVDILVLLPDAHASELDERIERFIGMAWDLGLEIGSSVRTVGQCIEEASHDVTVQTSLLEARRIVGSTALFERFMLRYREALDARAFFQAKVLEMRQRHAKFQDTPYSLEPNVKESPGGLRDLQTILWIARAAGFGSSWRELDTRGLITDREARELRRNEGFLKTLRARLHVIAGRRQDILVFDLQTQAAESFGYQPTSAKRASEQLMRRYYWAAKAVTQLATILIQNIEAQLFPATSGVTRVLSPGRFVEKQGMLEIAADDVFERHPDAILEAFLLYEATRGVKGLSARTLRALYNSRDVMNNAWRRDPRNRRTFMQILQQPEGITHAFRLMNQTSVLGRYLLNFRRIVGQMQHDLYHVYTVDQHILMVLRNIRRFAVAEHAHEYPFCSQLIVNFERPWVLYVAALFHDIAKGRGGDHSALGMADARRFCREHGIEGDDAALVVWLVQHHLTMSQVAQKQDTSDPVVIKRFAELVGSERRLTALYLLTVADIRGTSPKVWNTWKGKLLEDLYRATLAVLGGAQPDAHSELKTRQEEALALLRLETVPPDAHRALWDQLDVGYFLRHDAADIAWQTRVLYRHVAADTAIVRARPSPVGDALQVLVYVKDRSDLFAGICAYFDRNGLSVLDARVNTTRHGYALDNFIVTQTEHDVQYRDIANLVEQQLAARLAESAPLPEPSKGRLSRLSRTFPITPRVDLRADERGQYYILSVSANDRPGLLYSIARVLAEHRVGVHAARINTLGERVEDVFMLDGTGLSDNRLQIQVETELLRAIAV</sequence>
<feature type="chain" id="PRO_0000192726" description="Bifunctional uridylyltransferase/uridylyl-removing enzyme">
    <location>
        <begin position="1"/>
        <end position="858"/>
    </location>
</feature>
<feature type="domain" description="HD" evidence="2">
    <location>
        <begin position="443"/>
        <end position="565"/>
    </location>
</feature>
<feature type="domain" description="ACT 1" evidence="1">
    <location>
        <begin position="682"/>
        <end position="761"/>
    </location>
</feature>
<feature type="domain" description="ACT 2" evidence="1">
    <location>
        <begin position="790"/>
        <end position="858"/>
    </location>
</feature>
<feature type="region of interest" description="Uridylyltransferase">
    <location>
        <begin position="1"/>
        <end position="324"/>
    </location>
</feature>
<feature type="region of interest" description="Uridylyl-removing">
    <location>
        <begin position="325"/>
        <end position="681"/>
    </location>
</feature>
<evidence type="ECO:0000255" key="1">
    <source>
        <dbReference type="HAMAP-Rule" id="MF_00277"/>
    </source>
</evidence>
<evidence type="ECO:0000255" key="2">
    <source>
        <dbReference type="PROSITE-ProRule" id="PRU01175"/>
    </source>
</evidence>
<accession>Q63T10</accession>
<name>GLND_BURPS</name>
<protein>
    <recommendedName>
        <fullName evidence="1">Bifunctional uridylyltransferase/uridylyl-removing enzyme</fullName>
        <shortName evidence="1">UTase/UR</shortName>
    </recommendedName>
    <alternativeName>
        <fullName evidence="1">Bifunctional [protein-PII] modification enzyme</fullName>
    </alternativeName>
    <alternativeName>
        <fullName evidence="1">Bifunctional nitrogen sensor protein</fullName>
    </alternativeName>
    <domain>
        <recommendedName>
            <fullName evidence="1">[Protein-PII] uridylyltransferase</fullName>
            <shortName evidence="1">PII uridylyltransferase</shortName>
            <shortName evidence="1">UTase</shortName>
            <ecNumber evidence="1">2.7.7.59</ecNumber>
        </recommendedName>
    </domain>
    <domain>
        <recommendedName>
            <fullName evidence="1">[Protein-PII]-UMP uridylyl-removing enzyme</fullName>
            <shortName evidence="1">UR</shortName>
            <ecNumber evidence="1">3.1.4.-</ecNumber>
        </recommendedName>
    </domain>
</protein>
<gene>
    <name evidence="1" type="primary">glnD</name>
    <name type="ordered locus">BPSL2161</name>
</gene>
<dbReference type="EC" id="2.7.7.59" evidence="1"/>
<dbReference type="EC" id="3.1.4.-" evidence="1"/>
<dbReference type="EMBL" id="BX571965">
    <property type="protein sequence ID" value="CAH36163.1"/>
    <property type="molecule type" value="Genomic_DNA"/>
</dbReference>
<dbReference type="RefSeq" id="WP_004544413.1">
    <property type="nucleotide sequence ID" value="NC_006350.1"/>
</dbReference>
<dbReference type="RefSeq" id="YP_108756.1">
    <property type="nucleotide sequence ID" value="NC_006350.1"/>
</dbReference>
<dbReference type="SMR" id="Q63T10"/>
<dbReference type="STRING" id="272560.BPSL2161"/>
<dbReference type="KEGG" id="bps:BPSL2161"/>
<dbReference type="PATRIC" id="fig|272560.51.peg.3290"/>
<dbReference type="eggNOG" id="COG2844">
    <property type="taxonomic scope" value="Bacteria"/>
</dbReference>
<dbReference type="Proteomes" id="UP000000605">
    <property type="component" value="Chromosome 1"/>
</dbReference>
<dbReference type="GO" id="GO:0008773">
    <property type="term" value="F:[protein-PII] uridylyltransferase activity"/>
    <property type="evidence" value="ECO:0007669"/>
    <property type="project" value="UniProtKB-UniRule"/>
</dbReference>
<dbReference type="GO" id="GO:0008081">
    <property type="term" value="F:phosphoric diester hydrolase activity"/>
    <property type="evidence" value="ECO:0007669"/>
    <property type="project" value="UniProtKB-UniRule"/>
</dbReference>
<dbReference type="GO" id="GO:0006808">
    <property type="term" value="P:regulation of nitrogen utilization"/>
    <property type="evidence" value="ECO:0007669"/>
    <property type="project" value="UniProtKB-UniRule"/>
</dbReference>
<dbReference type="CDD" id="cd04899">
    <property type="entry name" value="ACT_ACR-UUR-like_2"/>
    <property type="match status" value="1"/>
</dbReference>
<dbReference type="CDD" id="cd04900">
    <property type="entry name" value="ACT_UUR-like_1"/>
    <property type="match status" value="1"/>
</dbReference>
<dbReference type="CDD" id="cd00077">
    <property type="entry name" value="HDc"/>
    <property type="match status" value="1"/>
</dbReference>
<dbReference type="CDD" id="cd05401">
    <property type="entry name" value="NT_GlnE_GlnD_like"/>
    <property type="match status" value="1"/>
</dbReference>
<dbReference type="Gene3D" id="3.30.70.260">
    <property type="match status" value="1"/>
</dbReference>
<dbReference type="Gene3D" id="3.30.460.10">
    <property type="entry name" value="Beta Polymerase, domain 2"/>
    <property type="match status" value="1"/>
</dbReference>
<dbReference type="Gene3D" id="1.10.3210.10">
    <property type="entry name" value="Hypothetical protein af1432"/>
    <property type="match status" value="1"/>
</dbReference>
<dbReference type="Gene3D" id="1.20.120.330">
    <property type="entry name" value="Nucleotidyltransferases domain 2"/>
    <property type="match status" value="1"/>
</dbReference>
<dbReference type="HAMAP" id="MF_00277">
    <property type="entry name" value="PII_uridylyl_transf"/>
    <property type="match status" value="1"/>
</dbReference>
<dbReference type="InterPro" id="IPR045865">
    <property type="entry name" value="ACT-like_dom_sf"/>
</dbReference>
<dbReference type="InterPro" id="IPR002912">
    <property type="entry name" value="ACT_dom"/>
</dbReference>
<dbReference type="InterPro" id="IPR003607">
    <property type="entry name" value="HD/PDEase_dom"/>
</dbReference>
<dbReference type="InterPro" id="IPR006674">
    <property type="entry name" value="HD_domain"/>
</dbReference>
<dbReference type="InterPro" id="IPR043519">
    <property type="entry name" value="NT_sf"/>
</dbReference>
<dbReference type="InterPro" id="IPR013546">
    <property type="entry name" value="PII_UdlTrfase/GS_AdlTrfase"/>
</dbReference>
<dbReference type="InterPro" id="IPR002934">
    <property type="entry name" value="Polymerase_NTP_transf_dom"/>
</dbReference>
<dbReference type="InterPro" id="IPR010043">
    <property type="entry name" value="UTase/UR"/>
</dbReference>
<dbReference type="NCBIfam" id="NF002837">
    <property type="entry name" value="PRK03059.1"/>
    <property type="match status" value="1"/>
</dbReference>
<dbReference type="NCBIfam" id="TIGR01693">
    <property type="entry name" value="UTase_glnD"/>
    <property type="match status" value="1"/>
</dbReference>
<dbReference type="PANTHER" id="PTHR47320">
    <property type="entry name" value="BIFUNCTIONAL URIDYLYLTRANSFERASE/URIDYLYL-REMOVING ENZYME"/>
    <property type="match status" value="1"/>
</dbReference>
<dbReference type="PANTHER" id="PTHR47320:SF1">
    <property type="entry name" value="BIFUNCTIONAL URIDYLYLTRANSFERASE_URIDYLYL-REMOVING ENZYME"/>
    <property type="match status" value="1"/>
</dbReference>
<dbReference type="Pfam" id="PF08335">
    <property type="entry name" value="GlnD_UR_UTase"/>
    <property type="match status" value="1"/>
</dbReference>
<dbReference type="Pfam" id="PF01966">
    <property type="entry name" value="HD"/>
    <property type="match status" value="1"/>
</dbReference>
<dbReference type="Pfam" id="PF01909">
    <property type="entry name" value="NTP_transf_2"/>
    <property type="match status" value="1"/>
</dbReference>
<dbReference type="PIRSF" id="PIRSF006288">
    <property type="entry name" value="PII_uridyltransf"/>
    <property type="match status" value="1"/>
</dbReference>
<dbReference type="SMART" id="SM00471">
    <property type="entry name" value="HDc"/>
    <property type="match status" value="1"/>
</dbReference>
<dbReference type="SUPFAM" id="SSF55021">
    <property type="entry name" value="ACT-like"/>
    <property type="match status" value="2"/>
</dbReference>
<dbReference type="SUPFAM" id="SSF109604">
    <property type="entry name" value="HD-domain/PDEase-like"/>
    <property type="match status" value="1"/>
</dbReference>
<dbReference type="SUPFAM" id="SSF81301">
    <property type="entry name" value="Nucleotidyltransferase"/>
    <property type="match status" value="1"/>
</dbReference>
<dbReference type="SUPFAM" id="SSF81593">
    <property type="entry name" value="Nucleotidyltransferase substrate binding subunit/domain"/>
    <property type="match status" value="1"/>
</dbReference>
<dbReference type="PROSITE" id="PS51671">
    <property type="entry name" value="ACT"/>
    <property type="match status" value="2"/>
</dbReference>
<dbReference type="PROSITE" id="PS51831">
    <property type="entry name" value="HD"/>
    <property type="match status" value="1"/>
</dbReference>
<comment type="function">
    <text evidence="1">Modifies, by uridylylation and deuridylylation, the PII regulatory proteins (GlnB and homologs), in response to the nitrogen status of the cell that GlnD senses through the glutamine level. Under low glutamine levels, catalyzes the conversion of the PII proteins and UTP to PII-UMP and PPi, while under higher glutamine levels, GlnD hydrolyzes PII-UMP to PII and UMP (deuridylylation). Thus, controls uridylylation state and activity of the PII proteins, and plays an important role in the regulation of nitrogen assimilation and metabolism.</text>
</comment>
<comment type="catalytic activity">
    <reaction evidence="1">
        <text>[protein-PII]-L-tyrosine + UTP = [protein-PII]-uridylyl-L-tyrosine + diphosphate</text>
        <dbReference type="Rhea" id="RHEA:13673"/>
        <dbReference type="Rhea" id="RHEA-COMP:12147"/>
        <dbReference type="Rhea" id="RHEA-COMP:12148"/>
        <dbReference type="ChEBI" id="CHEBI:33019"/>
        <dbReference type="ChEBI" id="CHEBI:46398"/>
        <dbReference type="ChEBI" id="CHEBI:46858"/>
        <dbReference type="ChEBI" id="CHEBI:90602"/>
        <dbReference type="EC" id="2.7.7.59"/>
    </reaction>
</comment>
<comment type="catalytic activity">
    <reaction evidence="1">
        <text>[protein-PII]-uridylyl-L-tyrosine + H2O = [protein-PII]-L-tyrosine + UMP + H(+)</text>
        <dbReference type="Rhea" id="RHEA:48600"/>
        <dbReference type="Rhea" id="RHEA-COMP:12147"/>
        <dbReference type="Rhea" id="RHEA-COMP:12148"/>
        <dbReference type="ChEBI" id="CHEBI:15377"/>
        <dbReference type="ChEBI" id="CHEBI:15378"/>
        <dbReference type="ChEBI" id="CHEBI:46858"/>
        <dbReference type="ChEBI" id="CHEBI:57865"/>
        <dbReference type="ChEBI" id="CHEBI:90602"/>
    </reaction>
</comment>
<comment type="cofactor">
    <cofactor evidence="1">
        <name>Mg(2+)</name>
        <dbReference type="ChEBI" id="CHEBI:18420"/>
    </cofactor>
</comment>
<comment type="activity regulation">
    <text evidence="1">Uridylyltransferase (UTase) activity is inhibited by glutamine, while glutamine activates uridylyl-removing (UR) activity.</text>
</comment>
<comment type="domain">
    <text evidence="1">Has four distinct domains: an N-terminal nucleotidyltransferase (NT) domain responsible for UTase activity, a central HD domain that encodes UR activity, and two C-terminal ACT domains that seem to have a role in glutamine sensing.</text>
</comment>
<comment type="similarity">
    <text evidence="1">Belongs to the GlnD family.</text>
</comment>